<proteinExistence type="evidence at protein level"/>
<feature type="transit peptide" description="Mitochondrion" evidence="4">
    <location>
        <begin position="1"/>
        <end position="16"/>
    </location>
</feature>
<feature type="chain" id="PRO_0000155832" description="Zinc phosphodiesterase ELAC protein 2">
    <location>
        <begin position="17"/>
        <end position="827"/>
    </location>
</feature>
<feature type="region of interest" description="Disordered" evidence="5">
    <location>
        <begin position="15"/>
        <end position="46"/>
    </location>
</feature>
<feature type="region of interest" description="Disordered" evidence="5">
    <location>
        <begin position="181"/>
        <end position="220"/>
    </location>
</feature>
<feature type="region of interest" description="Disordered" evidence="5">
    <location>
        <begin position="794"/>
        <end position="827"/>
    </location>
</feature>
<feature type="compositionally biased region" description="Basic and acidic residues" evidence="5">
    <location>
        <begin position="181"/>
        <end position="192"/>
    </location>
</feature>
<feature type="compositionally biased region" description="Polar residues" evidence="5">
    <location>
        <begin position="199"/>
        <end position="210"/>
    </location>
</feature>
<feature type="compositionally biased region" description="Basic and acidic residues" evidence="5">
    <location>
        <begin position="801"/>
        <end position="817"/>
    </location>
</feature>
<feature type="modified residue" description="Phosphoserine" evidence="3">
    <location>
        <position position="193"/>
    </location>
</feature>
<feature type="modified residue" description="Phosphoserine" evidence="2">
    <location>
        <position position="197"/>
    </location>
</feature>
<feature type="modified residue" description="Phosphoserine" evidence="3">
    <location>
        <position position="202"/>
    </location>
</feature>
<feature type="modified residue" description="Phosphoserine" evidence="3">
    <location>
        <position position="207"/>
    </location>
</feature>
<feature type="modified residue" description="Phosphoserine" evidence="3">
    <location>
        <position position="617"/>
    </location>
</feature>
<feature type="modified residue" description="Phosphoserine" evidence="3">
    <location>
        <position position="735"/>
    </location>
</feature>
<feature type="modified residue" description="Phosphothreonine" evidence="2">
    <location>
        <position position="795"/>
    </location>
</feature>
<feature type="modified residue" description="Phosphoserine" evidence="2">
    <location>
        <position position="800"/>
    </location>
</feature>
<feature type="modified residue" description="Phosphoserine" evidence="7">
    <location>
        <position position="818"/>
    </location>
</feature>
<reference key="1">
    <citation type="journal article" date="2004" name="Biochim. Biophys. Acta">
        <title>Structure of primate and rodent orthologs of the prostate cancer susceptibility gene ELAC2.</title>
        <authorList>
            <person name="Dumont M."/>
            <person name="Frank D."/>
            <person name="Moisan A.-M."/>
            <person name="Tranchant M."/>
            <person name="Soucy P."/>
            <person name="Breton R."/>
            <person name="Labrie F."/>
            <person name="Tavtigian S.V."/>
            <person name="Simard J."/>
        </authorList>
    </citation>
    <scope>NUCLEOTIDE SEQUENCE [MRNA]</scope>
    <source>
        <strain>Sprague-Dawley</strain>
    </source>
</reference>
<reference key="2">
    <citation type="journal article" date="2012" name="Nat. Commun.">
        <title>Quantitative maps of protein phosphorylation sites across 14 different rat organs and tissues.</title>
        <authorList>
            <person name="Lundby A."/>
            <person name="Secher A."/>
            <person name="Lage K."/>
            <person name="Nordsborg N.B."/>
            <person name="Dmytriyev A."/>
            <person name="Lundby C."/>
            <person name="Olsen J.V."/>
        </authorList>
    </citation>
    <scope>PHOSPHORYLATION [LARGE SCALE ANALYSIS] AT SER-818</scope>
    <scope>IDENTIFICATION BY MASS SPECTROMETRY [LARGE SCALE ANALYSIS]</scope>
</reference>
<protein>
    <recommendedName>
        <fullName>Zinc phosphodiesterase ELAC protein 2</fullName>
        <ecNumber>3.1.26.11</ecNumber>
    </recommendedName>
    <alternativeName>
        <fullName>ElaC homolog protein 2</fullName>
    </alternativeName>
    <alternativeName>
        <fullName>Ribonuclease Z 2</fullName>
        <shortName>RNase Z 2</shortName>
    </alternativeName>
    <alternativeName>
        <fullName>tRNA 3 endonuclease 2</fullName>
    </alternativeName>
    <alternativeName>
        <fullName>tRNase Z 2</fullName>
    </alternativeName>
</protein>
<sequence length="827" mass="92340">MWALRSLLRPLGLRTMSQGSARRPRPPKDPLRHLRTREKRGPGWGPGGPNTVYLQVVAAGGRDAAAALYVFSEYNRYLFNCGEGVQRLMQEHKLKVARLDNIFLTRMHWSNVGGLCGMILTLKETGLPKCVLSGPPQLEKYLEAIKIFSGPLKGIDLAVRPHSAPEYKDETMTVYQVPIHSERRCGEQEPSRSPKRSPNRLSPKQSSSDPGSAENGQCLPEGSSAGVNGKAWGRDPSLVVAFVCKLHLRKGNFLVLKAKELGLPVGTAAIAPIIAAVKDGKSITYEGREIAAEELCTPPDPGLVFIVVECPDEGFIQPICENDTFQRYQGEADAPVAVVVHIAPESVLIDSRYQQWMERFGPDTQHLILNENCPSVHNLRSHKIQTQLSLIHPDIFPQLTSFHSKEEGSTFSLPTVRGECLLKYHVRPKREWQRDTTLDCNTDEFIAEALELPNFQESVEEYRKNMQASPAPAEKRSQYPEIVFLGTGSAIPMKIRNVSSTLVNLSPDKSVLLDCGEGTFGQLCRHYGQQIDRVLCNLTAVFVSHLHADHHTGLLNILLQREHALASLGKPFQPLLVVAPTQLRAWLQQYHNQCQEILHHISMIPAKCLQKGAEVPSPPVERLISLLLETCDLQEFQTCLVRHCKHAFGCALVHSSGWKVVYSGDTMPCEALVQMGKDATLLIHEATLEDGLEEEAVEKTHSTTSQAIGVGMRMNAEFIMLNHFSQRYAKIPLFSPDFNEKVGIAFDHMKVCFGDFPTVPKLIPPLKALFADDIEEMVERREKRELRLVRAALLTQQADSSEDREPHQKRAHSEEPHSPQSKKVRAQ</sequence>
<keyword id="KW-0255">Endonuclease</keyword>
<keyword id="KW-0378">Hydrolase</keyword>
<keyword id="KW-0479">Metal-binding</keyword>
<keyword id="KW-0496">Mitochondrion</keyword>
<keyword id="KW-1135">Mitochondrion nucleoid</keyword>
<keyword id="KW-0540">Nuclease</keyword>
<keyword id="KW-0539">Nucleus</keyword>
<keyword id="KW-0597">Phosphoprotein</keyword>
<keyword id="KW-1185">Reference proteome</keyword>
<keyword id="KW-0809">Transit peptide</keyword>
<keyword id="KW-0819">tRNA processing</keyword>
<keyword id="KW-0862">Zinc</keyword>
<evidence type="ECO:0000250" key="1"/>
<evidence type="ECO:0000250" key="2">
    <source>
        <dbReference type="UniProtKB" id="Q80Y81"/>
    </source>
</evidence>
<evidence type="ECO:0000250" key="3">
    <source>
        <dbReference type="UniProtKB" id="Q9BQ52"/>
    </source>
</evidence>
<evidence type="ECO:0000255" key="4"/>
<evidence type="ECO:0000256" key="5">
    <source>
        <dbReference type="SAM" id="MobiDB-lite"/>
    </source>
</evidence>
<evidence type="ECO:0000305" key="6"/>
<evidence type="ECO:0007744" key="7">
    <source>
    </source>
</evidence>
<accession>Q8CGS5</accession>
<organism>
    <name type="scientific">Rattus norvegicus</name>
    <name type="common">Rat</name>
    <dbReference type="NCBI Taxonomy" id="10116"/>
    <lineage>
        <taxon>Eukaryota</taxon>
        <taxon>Metazoa</taxon>
        <taxon>Chordata</taxon>
        <taxon>Craniata</taxon>
        <taxon>Vertebrata</taxon>
        <taxon>Euteleostomi</taxon>
        <taxon>Mammalia</taxon>
        <taxon>Eutheria</taxon>
        <taxon>Euarchontoglires</taxon>
        <taxon>Glires</taxon>
        <taxon>Rodentia</taxon>
        <taxon>Myomorpha</taxon>
        <taxon>Muroidea</taxon>
        <taxon>Muridae</taxon>
        <taxon>Murinae</taxon>
        <taxon>Rattus</taxon>
    </lineage>
</organism>
<dbReference type="EC" id="3.1.26.11"/>
<dbReference type="EMBL" id="AY149902">
    <property type="protein sequence ID" value="AAN75376.1"/>
    <property type="molecule type" value="mRNA"/>
</dbReference>
<dbReference type="RefSeq" id="NP_758829.1">
    <property type="nucleotide sequence ID" value="NM_172326.1"/>
</dbReference>
<dbReference type="SMR" id="Q8CGS5"/>
<dbReference type="FunCoup" id="Q8CGS5">
    <property type="interactions" value="2369"/>
</dbReference>
<dbReference type="STRING" id="10116.ENSRNOP00000004722"/>
<dbReference type="iPTMnet" id="Q8CGS5"/>
<dbReference type="PhosphoSitePlus" id="Q8CGS5"/>
<dbReference type="jPOST" id="Q8CGS5"/>
<dbReference type="PaxDb" id="10116-ENSRNOP00000004722"/>
<dbReference type="GeneID" id="282826"/>
<dbReference type="KEGG" id="rno:282826"/>
<dbReference type="UCSC" id="RGD:628882">
    <property type="organism name" value="rat"/>
</dbReference>
<dbReference type="AGR" id="RGD:628882"/>
<dbReference type="CTD" id="60528"/>
<dbReference type="RGD" id="628882">
    <property type="gene designation" value="Elac2"/>
</dbReference>
<dbReference type="eggNOG" id="KOG2121">
    <property type="taxonomic scope" value="Eukaryota"/>
</dbReference>
<dbReference type="InParanoid" id="Q8CGS5"/>
<dbReference type="OrthoDB" id="527344at2759"/>
<dbReference type="PhylomeDB" id="Q8CGS5"/>
<dbReference type="PRO" id="PR:Q8CGS5"/>
<dbReference type="Proteomes" id="UP000002494">
    <property type="component" value="Unplaced"/>
</dbReference>
<dbReference type="GO" id="GO:0042645">
    <property type="term" value="C:mitochondrial nucleoid"/>
    <property type="evidence" value="ECO:0000250"/>
    <property type="project" value="UniProtKB"/>
</dbReference>
<dbReference type="GO" id="GO:0005739">
    <property type="term" value="C:mitochondrion"/>
    <property type="evidence" value="ECO:0000250"/>
    <property type="project" value="UniProtKB"/>
</dbReference>
<dbReference type="GO" id="GO:0005634">
    <property type="term" value="C:nucleus"/>
    <property type="evidence" value="ECO:0000250"/>
    <property type="project" value="UniProtKB"/>
</dbReference>
<dbReference type="GO" id="GO:0042781">
    <property type="term" value="F:3'-tRNA processing endoribonuclease activity"/>
    <property type="evidence" value="ECO:0000318"/>
    <property type="project" value="GO_Central"/>
</dbReference>
<dbReference type="GO" id="GO:0046872">
    <property type="term" value="F:metal ion binding"/>
    <property type="evidence" value="ECO:0007669"/>
    <property type="project" value="UniProtKB-KW"/>
</dbReference>
<dbReference type="GO" id="GO:0004549">
    <property type="term" value="F:tRNA-specific ribonuclease activity"/>
    <property type="evidence" value="ECO:0000266"/>
    <property type="project" value="RGD"/>
</dbReference>
<dbReference type="GO" id="GO:1990180">
    <property type="term" value="P:mitochondrial tRNA 3'-end processing"/>
    <property type="evidence" value="ECO:0000250"/>
    <property type="project" value="UniProtKB"/>
</dbReference>
<dbReference type="CDD" id="cd07718">
    <property type="entry name" value="RNaseZ_ELAC1_ELAC2-C-term-like_MBL-fold"/>
    <property type="match status" value="1"/>
</dbReference>
<dbReference type="FunFam" id="3.60.15.10:FF:000014">
    <property type="entry name" value="Zinc phosphodiesterase ELAC protein 2"/>
    <property type="match status" value="1"/>
</dbReference>
<dbReference type="Gene3D" id="3.60.15.10">
    <property type="entry name" value="Ribonuclease Z/Hydroxyacylglutathione hydrolase-like"/>
    <property type="match status" value="2"/>
</dbReference>
<dbReference type="InterPro" id="IPR001279">
    <property type="entry name" value="Metallo-B-lactamas"/>
</dbReference>
<dbReference type="InterPro" id="IPR036866">
    <property type="entry name" value="RibonucZ/Hydroxyglut_hydro"/>
</dbReference>
<dbReference type="InterPro" id="IPR047151">
    <property type="entry name" value="RNZ2-like"/>
</dbReference>
<dbReference type="InterPro" id="IPR027794">
    <property type="entry name" value="tRNase_Z_dom"/>
</dbReference>
<dbReference type="PANTHER" id="PTHR12553">
    <property type="entry name" value="ZINC PHOSPHODIESTERASE ELAC PROTEIN 2"/>
    <property type="match status" value="1"/>
</dbReference>
<dbReference type="PANTHER" id="PTHR12553:SF49">
    <property type="entry name" value="ZINC PHOSPHODIESTERASE ELAC PROTEIN 2"/>
    <property type="match status" value="1"/>
</dbReference>
<dbReference type="Pfam" id="PF12706">
    <property type="entry name" value="Lactamase_B_2"/>
    <property type="match status" value="1"/>
</dbReference>
<dbReference type="Pfam" id="PF13691">
    <property type="entry name" value="Lactamase_B_4"/>
    <property type="match status" value="1"/>
</dbReference>
<dbReference type="SUPFAM" id="SSF56281">
    <property type="entry name" value="Metallo-hydrolase/oxidoreductase"/>
    <property type="match status" value="2"/>
</dbReference>
<gene>
    <name type="primary">Elac2</name>
</gene>
<comment type="function">
    <text evidence="3">Zinc phosphodiesterase, which displays mitochondrial tRNA 3'-processing endonuclease activity. Involved in tRNA maturation, by removing a 3'-trailer from precursor tRNA. Associates with mitochondrial DNA complexes at the nucleoids to initiate RNA processing and ribosome assembly.</text>
</comment>
<comment type="catalytic activity">
    <reaction evidence="3">
        <text>Endonucleolytic cleavage of RNA, removing extra 3' nucleotides from tRNA precursor, generating 3' termini of tRNAs. A 3'-hydroxy group is left at the tRNA terminus and a 5'-phosphoryl group is left at the trailer molecule.</text>
        <dbReference type="EC" id="3.1.26.11"/>
    </reaction>
</comment>
<comment type="cofactor">
    <cofactor evidence="6">
        <name>Zn(2+)</name>
        <dbReference type="ChEBI" id="CHEBI:29105"/>
    </cofactor>
</comment>
<comment type="subunit">
    <text evidence="1">Homodimer. Interacts with PTCD1.</text>
</comment>
<comment type="subcellular location">
    <subcellularLocation>
        <location evidence="3">Mitochondrion</location>
    </subcellularLocation>
    <subcellularLocation>
        <location evidence="3">Mitochondrion matrix</location>
        <location evidence="3">Mitochondrion nucleoid</location>
    </subcellularLocation>
    <subcellularLocation>
        <location evidence="3">Nucleus</location>
    </subcellularLocation>
    <text evidence="3">Mainly mitochondrial.</text>
</comment>
<comment type="similarity">
    <text evidence="6">Belongs to the RNase Z family.</text>
</comment>
<name>RNZ2_RAT</name>